<proteinExistence type="evidence at protein level"/>
<dbReference type="EMBL" id="AY364247">
    <property type="protein sequence ID" value="AAQ76806.1"/>
    <property type="molecule type" value="mRNA"/>
</dbReference>
<dbReference type="EMBL" id="AK123719">
    <property type="protein sequence ID" value="BAG53946.1"/>
    <property type="molecule type" value="mRNA"/>
</dbReference>
<dbReference type="EMBL" id="CH471228">
    <property type="protein sequence ID" value="EAW66842.1"/>
    <property type="molecule type" value="Genomic_DNA"/>
</dbReference>
<dbReference type="EMBL" id="BC040442">
    <property type="protein sequence ID" value="AAH40442.1"/>
    <property type="molecule type" value="mRNA"/>
</dbReference>
<dbReference type="CCDS" id="CCDS10592.1"/>
<dbReference type="RefSeq" id="NP_775746.1">
    <property type="nucleotide sequence ID" value="NM_173475.4"/>
</dbReference>
<dbReference type="PDB" id="4GBA">
    <property type="method" value="X-ray"/>
    <property type="resolution" value="2.40 A"/>
    <property type="chains" value="A/B=86-304"/>
</dbReference>
<dbReference type="PDBsum" id="4GBA"/>
<dbReference type="SMR" id="Q8IWE4"/>
<dbReference type="BioGRID" id="125841">
    <property type="interactions" value="28"/>
</dbReference>
<dbReference type="DIP" id="DIP-60769N"/>
<dbReference type="ELM" id="Q8IWE4"/>
<dbReference type="FunCoup" id="Q8IWE4">
    <property type="interactions" value="2123"/>
</dbReference>
<dbReference type="IntAct" id="Q8IWE4">
    <property type="interactions" value="11"/>
</dbReference>
<dbReference type="MINT" id="Q8IWE4"/>
<dbReference type="STRING" id="9606.ENSP00000319482"/>
<dbReference type="BindingDB" id="Q8IWE4"/>
<dbReference type="ChEMBL" id="CHEMBL4295894"/>
<dbReference type="iPTMnet" id="Q8IWE4"/>
<dbReference type="PhosphoSitePlus" id="Q8IWE4"/>
<dbReference type="SwissPalm" id="Q8IWE4"/>
<dbReference type="BioMuta" id="DCUN1D3"/>
<dbReference type="DMDM" id="74728175"/>
<dbReference type="jPOST" id="Q8IWE4"/>
<dbReference type="MassIVE" id="Q8IWE4"/>
<dbReference type="PaxDb" id="9606-ENSP00000319482"/>
<dbReference type="PeptideAtlas" id="Q8IWE4"/>
<dbReference type="ProteomicsDB" id="70849"/>
<dbReference type="Pumba" id="Q8IWE4"/>
<dbReference type="Antibodypedia" id="25634">
    <property type="antibodies" value="62 antibodies from 18 providers"/>
</dbReference>
<dbReference type="DNASU" id="123879"/>
<dbReference type="Ensembl" id="ENST00000324344.9">
    <property type="protein sequence ID" value="ENSP00000319482.3"/>
    <property type="gene ID" value="ENSG00000188215.10"/>
</dbReference>
<dbReference type="Ensembl" id="ENST00000563934.1">
    <property type="protein sequence ID" value="ENSP00000454762.1"/>
    <property type="gene ID" value="ENSG00000188215.10"/>
</dbReference>
<dbReference type="GeneID" id="123879"/>
<dbReference type="KEGG" id="hsa:123879"/>
<dbReference type="MANE-Select" id="ENST00000324344.9">
    <property type="protein sequence ID" value="ENSP00000319482.3"/>
    <property type="RefSeq nucleotide sequence ID" value="NM_173475.4"/>
    <property type="RefSeq protein sequence ID" value="NP_775746.1"/>
</dbReference>
<dbReference type="UCSC" id="uc002dhz.4">
    <property type="organism name" value="human"/>
</dbReference>
<dbReference type="AGR" id="HGNC:28734"/>
<dbReference type="CTD" id="123879"/>
<dbReference type="GeneCards" id="DCUN1D3"/>
<dbReference type="HGNC" id="HGNC:28734">
    <property type="gene designation" value="DCUN1D3"/>
</dbReference>
<dbReference type="HPA" id="ENSG00000188215">
    <property type="expression patterns" value="Low tissue specificity"/>
</dbReference>
<dbReference type="MIM" id="616167">
    <property type="type" value="gene"/>
</dbReference>
<dbReference type="neXtProt" id="NX_Q8IWE4"/>
<dbReference type="OpenTargets" id="ENSG00000188215"/>
<dbReference type="PharmGKB" id="PA142672009"/>
<dbReference type="VEuPathDB" id="HostDB:ENSG00000188215"/>
<dbReference type="eggNOG" id="KOG3077">
    <property type="taxonomic scope" value="Eukaryota"/>
</dbReference>
<dbReference type="GeneTree" id="ENSGT00940000154944"/>
<dbReference type="HOGENOM" id="CLU_047042_2_0_1"/>
<dbReference type="InParanoid" id="Q8IWE4"/>
<dbReference type="OMA" id="DQMNQNI"/>
<dbReference type="OrthoDB" id="27198at2759"/>
<dbReference type="PAN-GO" id="Q8IWE4">
    <property type="GO annotations" value="6 GO annotations based on evolutionary models"/>
</dbReference>
<dbReference type="PhylomeDB" id="Q8IWE4"/>
<dbReference type="TreeFam" id="TF313332"/>
<dbReference type="PathwayCommons" id="Q8IWE4"/>
<dbReference type="Reactome" id="R-HSA-8951664">
    <property type="pathway name" value="Neddylation"/>
</dbReference>
<dbReference type="SignaLink" id="Q8IWE4"/>
<dbReference type="BioGRID-ORCS" id="123879">
    <property type="hits" value="28 hits in 1165 CRISPR screens"/>
</dbReference>
<dbReference type="EvolutionaryTrace" id="Q8IWE4"/>
<dbReference type="GenomeRNAi" id="123879"/>
<dbReference type="Pharos" id="Q8IWE4">
    <property type="development level" value="Tchem"/>
</dbReference>
<dbReference type="PRO" id="PR:Q8IWE4"/>
<dbReference type="Proteomes" id="UP000005640">
    <property type="component" value="Chromosome 16"/>
</dbReference>
<dbReference type="RNAct" id="Q8IWE4">
    <property type="molecule type" value="protein"/>
</dbReference>
<dbReference type="Bgee" id="ENSG00000188215">
    <property type="expression patterns" value="Expressed in secondary oocyte and 173 other cell types or tissues"/>
</dbReference>
<dbReference type="GO" id="GO:0005737">
    <property type="term" value="C:cytoplasm"/>
    <property type="evidence" value="ECO:0000315"/>
    <property type="project" value="UniProtKB"/>
</dbReference>
<dbReference type="GO" id="GO:0005829">
    <property type="term" value="C:cytosol"/>
    <property type="evidence" value="ECO:0000314"/>
    <property type="project" value="HPA"/>
</dbReference>
<dbReference type="GO" id="GO:0005654">
    <property type="term" value="C:nucleoplasm"/>
    <property type="evidence" value="ECO:0000314"/>
    <property type="project" value="HPA"/>
</dbReference>
<dbReference type="GO" id="GO:0005634">
    <property type="term" value="C:nucleus"/>
    <property type="evidence" value="ECO:0000315"/>
    <property type="project" value="UniProtKB"/>
</dbReference>
<dbReference type="GO" id="GO:0048471">
    <property type="term" value="C:perinuclear region of cytoplasm"/>
    <property type="evidence" value="ECO:0000314"/>
    <property type="project" value="UniProtKB"/>
</dbReference>
<dbReference type="GO" id="GO:0005886">
    <property type="term" value="C:plasma membrane"/>
    <property type="evidence" value="ECO:0000314"/>
    <property type="project" value="UniProtKB"/>
</dbReference>
<dbReference type="GO" id="GO:0000151">
    <property type="term" value="C:ubiquitin ligase complex"/>
    <property type="evidence" value="ECO:0000318"/>
    <property type="project" value="GO_Central"/>
</dbReference>
<dbReference type="GO" id="GO:0097602">
    <property type="term" value="F:cullin family protein binding"/>
    <property type="evidence" value="ECO:0000315"/>
    <property type="project" value="UniProtKB"/>
</dbReference>
<dbReference type="GO" id="GO:0031624">
    <property type="term" value="F:ubiquitin conjugating enzyme binding"/>
    <property type="evidence" value="ECO:0000318"/>
    <property type="project" value="GO_Central"/>
</dbReference>
<dbReference type="GO" id="GO:0032182">
    <property type="term" value="F:ubiquitin-like protein binding"/>
    <property type="evidence" value="ECO:0000318"/>
    <property type="project" value="GO_Central"/>
</dbReference>
<dbReference type="GO" id="GO:0030308">
    <property type="term" value="P:negative regulation of cell growth"/>
    <property type="evidence" value="ECO:0000315"/>
    <property type="project" value="UniProtKB"/>
</dbReference>
<dbReference type="GO" id="GO:2000134">
    <property type="term" value="P:negative regulation of G1/S transition of mitotic cell cycle"/>
    <property type="evidence" value="ECO:0000315"/>
    <property type="project" value="UniProtKB"/>
</dbReference>
<dbReference type="GO" id="GO:2000435">
    <property type="term" value="P:negative regulation of protein neddylation"/>
    <property type="evidence" value="ECO:0000315"/>
    <property type="project" value="UniProtKB"/>
</dbReference>
<dbReference type="GO" id="GO:0043065">
    <property type="term" value="P:positive regulation of apoptotic process"/>
    <property type="evidence" value="ECO:0000315"/>
    <property type="project" value="UniProtKB"/>
</dbReference>
<dbReference type="GO" id="GO:2000436">
    <property type="term" value="P:positive regulation of protein neddylation"/>
    <property type="evidence" value="ECO:0000315"/>
    <property type="project" value="UniProtKB"/>
</dbReference>
<dbReference type="GO" id="GO:0045116">
    <property type="term" value="P:protein neddylation"/>
    <property type="evidence" value="ECO:0000318"/>
    <property type="project" value="GO_Central"/>
</dbReference>
<dbReference type="GO" id="GO:0010564">
    <property type="term" value="P:regulation of cell cycle process"/>
    <property type="evidence" value="ECO:0000315"/>
    <property type="project" value="UniProtKB"/>
</dbReference>
<dbReference type="GO" id="GO:2000434">
    <property type="term" value="P:regulation of protein neddylation"/>
    <property type="evidence" value="ECO:0000315"/>
    <property type="project" value="UniProtKB"/>
</dbReference>
<dbReference type="GO" id="GO:0010332">
    <property type="term" value="P:response to gamma radiation"/>
    <property type="evidence" value="ECO:0000314"/>
    <property type="project" value="UniProtKB"/>
</dbReference>
<dbReference type="GO" id="GO:0010225">
    <property type="term" value="P:response to UV-C"/>
    <property type="evidence" value="ECO:0000314"/>
    <property type="project" value="UniProtKB"/>
</dbReference>
<dbReference type="FunFam" id="1.10.238.10:FF:000126">
    <property type="entry name" value="DCN1-like protein"/>
    <property type="match status" value="1"/>
</dbReference>
<dbReference type="FunFam" id="1.10.238.200:FF:000003">
    <property type="entry name" value="DCN1-like protein 3"/>
    <property type="match status" value="1"/>
</dbReference>
<dbReference type="Gene3D" id="1.10.238.200">
    <property type="entry name" value="Cullin, PONY binding domain"/>
    <property type="match status" value="1"/>
</dbReference>
<dbReference type="Gene3D" id="1.10.238.10">
    <property type="entry name" value="EF-hand"/>
    <property type="match status" value="1"/>
</dbReference>
<dbReference type="InterPro" id="IPR014764">
    <property type="entry name" value="DCN-prot"/>
</dbReference>
<dbReference type="InterPro" id="IPR042460">
    <property type="entry name" value="DCN1-like_PONY"/>
</dbReference>
<dbReference type="InterPro" id="IPR005176">
    <property type="entry name" value="PONY_dom"/>
</dbReference>
<dbReference type="PANTHER" id="PTHR12281:SF31">
    <property type="entry name" value="DCN1-LIKE PROTEIN 3"/>
    <property type="match status" value="1"/>
</dbReference>
<dbReference type="PANTHER" id="PTHR12281">
    <property type="entry name" value="RP42 RELATED"/>
    <property type="match status" value="1"/>
</dbReference>
<dbReference type="Pfam" id="PF03556">
    <property type="entry name" value="Cullin_binding"/>
    <property type="match status" value="1"/>
</dbReference>
<dbReference type="PROSITE" id="PS51229">
    <property type="entry name" value="DCUN1"/>
    <property type="match status" value="1"/>
</dbReference>
<keyword id="KW-0002">3D-structure</keyword>
<keyword id="KW-1003">Cell membrane</keyword>
<keyword id="KW-0963">Cytoplasm</keyword>
<keyword id="KW-0449">Lipoprotein</keyword>
<keyword id="KW-0472">Membrane</keyword>
<keyword id="KW-0519">Myristate</keyword>
<keyword id="KW-0539">Nucleus</keyword>
<keyword id="KW-0564">Palmitate</keyword>
<keyword id="KW-1267">Proteomics identification</keyword>
<keyword id="KW-1185">Reference proteome</keyword>
<gene>
    <name evidence="12" type="primary">DCUN1D3</name>
    <name evidence="11" type="synonym">SCCRO3</name>
</gene>
<comment type="function">
    <text evidence="4 5 6 7 8 9">Contributes to the neddylation of all cullins by transferring NEDD8 from N-terminally acetylated NEDD8-conjugating E2s enzyme to different cullin C-terminal domain-RBX complexes and may play a role in the cell cycle progression by regulating the SCF ubiquitin E3 ligase complex, after UV damage (PubMed:18823379, PubMed:19617556, PubMed:23201271, PubMed:27542266). At the cell membrane, can promote and as well inhibit cullins neddylation (PubMed:19617556, PubMed:25349211, PubMed:26906416).</text>
</comment>
<comment type="subunit">
    <text evidence="5 6 7 8 9">Part of a complex containing DCUN1D3, CUL3 and RBX1 (PubMed:19617556). Interacts (via the DCUN1 domain) with the unneddylated cullins: interacts with CUL1, CUL2, CUL3, CUL4A, CUL4B and CUL5; these interactions promote the cullin neddylation and the identity of the cullin dictates the affinity of the interaction (PubMed:23201271, PubMed:26906416, PubMed:27542266). Interacts preferentially with CUL3; this interaction triggers the relocalization of CUL3 to the cell membrane where CUL3 is neddylated (PubMed:19617556). Interacts (via DCUN1 domain) with RBX1 (PubMed:25349211, PubMed:26906416). May also interact with regulators or subunits of cullin-RING ligases such as RNF7, ELOB and DDB1; these interactions are bridged by cullins (PubMed:26906416). Interacts (via DCUN1 domain) with CAND1; this interaction is bridged by cullins and strongly inhibits cullin neddylation (PubMed:26906416, PubMed:27542266). These CAND-cullin-DCNL complexes can only be neddylated in the presence of a substrate adapter (PubMed:26906416). Interacts (via DCUN1 domain) with the N-terminally acetylated form of UBE2M and UBE2F (PubMed:19617556, PubMed:23201271, PubMed:25349211).</text>
</comment>
<comment type="interaction">
    <interactant intactId="EBI-15794102">
        <id>Q8IWE4</id>
    </interactant>
    <interactant intactId="EBI-456129">
        <id>Q13618</id>
        <label>CUL3</label>
    </interactant>
    <organismsDiffer>false</organismsDiffer>
    <experiments>2</experiments>
</comment>
<comment type="interaction">
    <interactant intactId="EBI-15794102">
        <id>Q8IWE4</id>
    </interactant>
    <interactant intactId="EBI-15794202">
        <id>Q13618-1</id>
        <label>CUL3</label>
    </interactant>
    <organismsDiffer>false</organismsDiffer>
    <experiments>3</experiments>
</comment>
<comment type="subcellular location">
    <subcellularLocation>
        <location evidence="5 7 8">Cell membrane</location>
    </subcellularLocation>
    <subcellularLocation>
        <location evidence="4 8">Cytoplasm</location>
    </subcellularLocation>
    <subcellularLocation>
        <location evidence="4 8">Nucleus</location>
    </subcellularLocation>
    <subcellularLocation>
        <location evidence="4">Cytoplasm</location>
        <location evidence="4">Perinuclear region</location>
    </subcellularLocation>
    <text evidence="4 5">After UVC treatment, the protein enters to the nucleus gradually (PubMed:18823379). Cell membrane localization is essential for CUL3 neddylation (PubMed:19617556).</text>
</comment>
<comment type="tissue specificity">
    <text evidence="4 5 7 8">Tends to be down-regulated in different type of cancers, including lung neuroendocrine carcinoma, thyroid Huerthle cell carcinoma and lung squamous cell carcinoma (PubMed:25349211). Mostly expressed in testis and brain (PubMed:26906416). Highly expressed in liver, bladder and renal normal tissue than their tumor tissue counterparts (PubMed:18823379). Palmitoylation stabilizes DCUN1D3 at the cell membrane (PubMed:19617556).</text>
</comment>
<comment type="induction">
    <text evidence="4">Increases by UVC treatment.</text>
</comment>
<comment type="domain">
    <text evidence="5 6 7 8">The DCUN1 domain, also known as PONY domain, mediates the interaction with different cullins (PubMed:19617556, PubMed:23201271). The DCUN1 domain mediates the interaction with the N-terminally acetylated NEDD8-conjugating E2s enzyme leading to the NEDD8 transfer from N-terminally acetylated NEDD8-conjugating E2s enzyme to different cullin C-terminal domain-RBX complexes; the neddylation efficiency correlates with the DCUN1D5-cullin and DCUN1D5-E2 interaction affinities (PubMed:23201271). This domain is also involved in CAND1-, cullins- and RBX1-binding (PubMed:25349211, PubMed:26906416).</text>
</comment>
<name>DCNL3_HUMAN</name>
<reference key="1">
    <citation type="journal article" date="2006" name="BMC Genomics">
        <title>NovelFam3000 -- uncharacterized human protein domains conserved across model organisms.</title>
        <authorList>
            <person name="Kemmer D."/>
            <person name="Podowski R.M."/>
            <person name="Arenillas D."/>
            <person name="Lim J."/>
            <person name="Hodges E."/>
            <person name="Roth P."/>
            <person name="Sonnhammer E.L.L."/>
            <person name="Hoeoeg C."/>
            <person name="Wasserman W.W."/>
        </authorList>
    </citation>
    <scope>NUCLEOTIDE SEQUENCE [MRNA]</scope>
</reference>
<reference key="2">
    <citation type="journal article" date="2008" name="Cancer Sci.">
        <title>DCUN1D3, a novel UVC-responsive gene that is involved in cell cycle progression and cell growth.</title>
        <authorList>
            <person name="Ma T."/>
            <person name="Shi T."/>
            <person name="Huang J."/>
            <person name="Wu L."/>
            <person name="Hu F."/>
            <person name="He P."/>
            <person name="Deng W."/>
            <person name="Gao P."/>
            <person name="Zhang Y."/>
            <person name="Song Q."/>
            <person name="Ma D."/>
            <person name="Qiu X."/>
        </authorList>
    </citation>
    <scope>NUCLEOTIDE SEQUENCE [MRNA]</scope>
    <scope>TISSUE SPECIFICITY</scope>
    <scope>INDUCTION</scope>
    <scope>FUNCTION</scope>
</reference>
<reference key="3">
    <citation type="journal article" date="2004" name="Nat. Genet.">
        <title>Complete sequencing and characterization of 21,243 full-length human cDNAs.</title>
        <authorList>
            <person name="Ota T."/>
            <person name="Suzuki Y."/>
            <person name="Nishikawa T."/>
            <person name="Otsuki T."/>
            <person name="Sugiyama T."/>
            <person name="Irie R."/>
            <person name="Wakamatsu A."/>
            <person name="Hayashi K."/>
            <person name="Sato H."/>
            <person name="Nagai K."/>
            <person name="Kimura K."/>
            <person name="Makita H."/>
            <person name="Sekine M."/>
            <person name="Obayashi M."/>
            <person name="Nishi T."/>
            <person name="Shibahara T."/>
            <person name="Tanaka T."/>
            <person name="Ishii S."/>
            <person name="Yamamoto J."/>
            <person name="Saito K."/>
            <person name="Kawai Y."/>
            <person name="Isono Y."/>
            <person name="Nakamura Y."/>
            <person name="Nagahari K."/>
            <person name="Murakami K."/>
            <person name="Yasuda T."/>
            <person name="Iwayanagi T."/>
            <person name="Wagatsuma M."/>
            <person name="Shiratori A."/>
            <person name="Sudo H."/>
            <person name="Hosoiri T."/>
            <person name="Kaku Y."/>
            <person name="Kodaira H."/>
            <person name="Kondo H."/>
            <person name="Sugawara M."/>
            <person name="Takahashi M."/>
            <person name="Kanda K."/>
            <person name="Yokoi T."/>
            <person name="Furuya T."/>
            <person name="Kikkawa E."/>
            <person name="Omura Y."/>
            <person name="Abe K."/>
            <person name="Kamihara K."/>
            <person name="Katsuta N."/>
            <person name="Sato K."/>
            <person name="Tanikawa M."/>
            <person name="Yamazaki M."/>
            <person name="Ninomiya K."/>
            <person name="Ishibashi T."/>
            <person name="Yamashita H."/>
            <person name="Murakawa K."/>
            <person name="Fujimori K."/>
            <person name="Tanai H."/>
            <person name="Kimata M."/>
            <person name="Watanabe M."/>
            <person name="Hiraoka S."/>
            <person name="Chiba Y."/>
            <person name="Ishida S."/>
            <person name="Ono Y."/>
            <person name="Takiguchi S."/>
            <person name="Watanabe S."/>
            <person name="Yosida M."/>
            <person name="Hotuta T."/>
            <person name="Kusano J."/>
            <person name="Kanehori K."/>
            <person name="Takahashi-Fujii A."/>
            <person name="Hara H."/>
            <person name="Tanase T.-O."/>
            <person name="Nomura Y."/>
            <person name="Togiya S."/>
            <person name="Komai F."/>
            <person name="Hara R."/>
            <person name="Takeuchi K."/>
            <person name="Arita M."/>
            <person name="Imose N."/>
            <person name="Musashino K."/>
            <person name="Yuuki H."/>
            <person name="Oshima A."/>
            <person name="Sasaki N."/>
            <person name="Aotsuka S."/>
            <person name="Yoshikawa Y."/>
            <person name="Matsunawa H."/>
            <person name="Ichihara T."/>
            <person name="Shiohata N."/>
            <person name="Sano S."/>
            <person name="Moriya S."/>
            <person name="Momiyama H."/>
            <person name="Satoh N."/>
            <person name="Takami S."/>
            <person name="Terashima Y."/>
            <person name="Suzuki O."/>
            <person name="Nakagawa S."/>
            <person name="Senoh A."/>
            <person name="Mizoguchi H."/>
            <person name="Goto Y."/>
            <person name="Shimizu F."/>
            <person name="Wakebe H."/>
            <person name="Hishigaki H."/>
            <person name="Watanabe T."/>
            <person name="Sugiyama A."/>
            <person name="Takemoto M."/>
            <person name="Kawakami B."/>
            <person name="Yamazaki M."/>
            <person name="Watanabe K."/>
            <person name="Kumagai A."/>
            <person name="Itakura S."/>
            <person name="Fukuzumi Y."/>
            <person name="Fujimori Y."/>
            <person name="Komiyama M."/>
            <person name="Tashiro H."/>
            <person name="Tanigami A."/>
            <person name="Fujiwara T."/>
            <person name="Ono T."/>
            <person name="Yamada K."/>
            <person name="Fujii Y."/>
            <person name="Ozaki K."/>
            <person name="Hirao M."/>
            <person name="Ohmori Y."/>
            <person name="Kawabata A."/>
            <person name="Hikiji T."/>
            <person name="Kobatake N."/>
            <person name="Inagaki H."/>
            <person name="Ikema Y."/>
            <person name="Okamoto S."/>
            <person name="Okitani R."/>
            <person name="Kawakami T."/>
            <person name="Noguchi S."/>
            <person name="Itoh T."/>
            <person name="Shigeta K."/>
            <person name="Senba T."/>
            <person name="Matsumura K."/>
            <person name="Nakajima Y."/>
            <person name="Mizuno T."/>
            <person name="Morinaga M."/>
            <person name="Sasaki M."/>
            <person name="Togashi T."/>
            <person name="Oyama M."/>
            <person name="Hata H."/>
            <person name="Watanabe M."/>
            <person name="Komatsu T."/>
            <person name="Mizushima-Sugano J."/>
            <person name="Satoh T."/>
            <person name="Shirai Y."/>
            <person name="Takahashi Y."/>
            <person name="Nakagawa K."/>
            <person name="Okumura K."/>
            <person name="Nagase T."/>
            <person name="Nomura N."/>
            <person name="Kikuchi H."/>
            <person name="Masuho Y."/>
            <person name="Yamashita R."/>
            <person name="Nakai K."/>
            <person name="Yada T."/>
            <person name="Nakamura Y."/>
            <person name="Ohara O."/>
            <person name="Isogai T."/>
            <person name="Sugano S."/>
        </authorList>
    </citation>
    <scope>NUCLEOTIDE SEQUENCE [LARGE SCALE MRNA]</scope>
    <source>
        <tissue>Lung</tissue>
    </source>
</reference>
<reference key="4">
    <citation type="submission" date="2005-07" db="EMBL/GenBank/DDBJ databases">
        <authorList>
            <person name="Mural R.J."/>
            <person name="Istrail S."/>
            <person name="Sutton G.G."/>
            <person name="Florea L."/>
            <person name="Halpern A.L."/>
            <person name="Mobarry C.M."/>
            <person name="Lippert R."/>
            <person name="Walenz B."/>
            <person name="Shatkay H."/>
            <person name="Dew I."/>
            <person name="Miller J.R."/>
            <person name="Flanigan M.J."/>
            <person name="Edwards N.J."/>
            <person name="Bolanos R."/>
            <person name="Fasulo D."/>
            <person name="Halldorsson B.V."/>
            <person name="Hannenhalli S."/>
            <person name="Turner R."/>
            <person name="Yooseph S."/>
            <person name="Lu F."/>
            <person name="Nusskern D.R."/>
            <person name="Shue B.C."/>
            <person name="Zheng X.H."/>
            <person name="Zhong F."/>
            <person name="Delcher A.L."/>
            <person name="Huson D.H."/>
            <person name="Kravitz S.A."/>
            <person name="Mouchard L."/>
            <person name="Reinert K."/>
            <person name="Remington K.A."/>
            <person name="Clark A.G."/>
            <person name="Waterman M.S."/>
            <person name="Eichler E.E."/>
            <person name="Adams M.D."/>
            <person name="Hunkapiller M.W."/>
            <person name="Myers E.W."/>
            <person name="Venter J.C."/>
        </authorList>
    </citation>
    <scope>NUCLEOTIDE SEQUENCE [LARGE SCALE GENOMIC DNA]</scope>
</reference>
<reference key="5">
    <citation type="journal article" date="2004" name="Genome Res.">
        <title>The status, quality, and expansion of the NIH full-length cDNA project: the Mammalian Gene Collection (MGC).</title>
        <authorList>
            <consortium name="The MGC Project Team"/>
        </authorList>
    </citation>
    <scope>NUCLEOTIDE SEQUENCE [LARGE SCALE MRNA]</scope>
    <source>
        <tissue>Ovary</tissue>
    </source>
</reference>
<reference key="6">
    <citation type="journal article" date="2009" name="Proc. Natl. Acad. Sci. U.S.A.">
        <title>The human Dcn1-like protein DCNL3 promotes Cul3 neddylation at membranes.</title>
        <authorList>
            <person name="Meyer-Schaller N."/>
            <person name="Chou Y.C."/>
            <person name="Sumara I."/>
            <person name="Martin D.D."/>
            <person name="Kurz T."/>
            <person name="Katheder N."/>
            <person name="Hofmann K."/>
            <person name="Berthiaume L.G."/>
            <person name="Sicheri F."/>
            <person name="Peter M."/>
        </authorList>
    </citation>
    <scope>FUNCTION</scope>
    <scope>INTERACTION WITH CUL1; CUL2; CUL3 AND UBE2M</scope>
    <scope>MUTAGENESIS OF GLY-2; CYS-4; CYS-8; ASP-241; ALA-265 AND ASP-271</scope>
    <scope>DOMAIN</scope>
    <scope>MYRISTOYLATION AT GLY-2</scope>
    <scope>SUBCELLULAR LOCATION</scope>
</reference>
<reference key="7">
    <citation type="journal article" date="2014" name="J. Biol. Chem.">
        <title>SCCRO3 (DCUN1D3) antagonizes the neddylation and oncogenic activity of SCCRO (DCUN1D1).</title>
        <authorList>
            <person name="Huang G."/>
            <person name="Stock C."/>
            <person name="Bommelje C.C."/>
            <person name="Weeda V.B."/>
            <person name="Shah K."/>
            <person name="Bains S."/>
            <person name="Buss E."/>
            <person name="Shaha M."/>
            <person name="Rechler W."/>
            <person name="Ramanathan S.Y."/>
            <person name="Singh B."/>
        </authorList>
    </citation>
    <scope>FUNCTION</scope>
    <scope>INTERACTION WITH CAND1; CUL1; CUL3 AND RBX1</scope>
    <scope>LACK OF INTERACTION WITH UBE2M</scope>
    <scope>SUBCELLULAR LOCATION</scope>
    <scope>TISSUE SPECIFICITY</scope>
    <scope>MUTAGENESIS OF 1-MET--ASN-26; GLY-2; ASP-241; ALA-265 AND ASP-271</scope>
    <scope>VARIANTS SER-2 AND PHE-239</scope>
</reference>
<reference key="8">
    <citation type="journal article" date="2016" name="J. Cell Sci.">
        <title>Characterization of the mammalian family of DCN-type NEDD8 E3 ligases.</title>
        <authorList>
            <person name="Keuss M.J."/>
            <person name="Thomas Y."/>
            <person name="Mcarthur R."/>
            <person name="Wood N.T."/>
            <person name="Knebel A."/>
            <person name="Kurz T."/>
        </authorList>
    </citation>
    <scope>INTERACTION WITH CUL1; CUL2; CUL3; CUL4A; CUL4B; CUL5; CAND1; RBX1; RNF7; ELOB AND DDB1</scope>
    <scope>SUBCELLULAR LOCATION</scope>
    <scope>FUNCTION</scope>
    <scope>TISSUE SPECIFICITY</scope>
    <scope>MUTAGENESIS OF ASP-241; ALA-265 AND ASP-271</scope>
</reference>
<reference key="9">
    <citation type="journal article" date="2016" name="Oncotarget">
        <title>DCUN1D3 activates SCFSKP2 ubiquitin E3 ligase activity and cell cycle progression under UV damage.</title>
        <authorList>
            <person name="Zhang S."/>
            <person name="Huang J."/>
            <person name="Shi T."/>
            <person name="Hu F."/>
            <person name="Zhang L."/>
            <person name="Zhou P.K."/>
            <person name="Ma D."/>
            <person name="Ma T."/>
            <person name="Qiu X."/>
        </authorList>
    </citation>
    <scope>INTERACTION WITH CAND1 AND CUL1</scope>
    <scope>FUNCTION</scope>
</reference>
<reference key="10">
    <citation type="journal article" date="2013" name="Structure">
        <title>Structural conservation of distinctive N-terminal acetylation-dependent interactions across a family of mammalian NEDD8 ligation enzymes.</title>
        <authorList>
            <person name="Monda J.K."/>
            <person name="Scott D.C."/>
            <person name="Miller D.J."/>
            <person name="Lydeard J."/>
            <person name="King D."/>
            <person name="Harper J.W."/>
            <person name="Bennett E.J."/>
            <person name="Schulman B.A."/>
        </authorList>
    </citation>
    <scope>X-RAY CRYSTALLOGRAPHY (2.4 ANGSTROMS) OF 86-304 IN COMPLEX WITH UBE2F PEPTIDE</scope>
    <scope>INTERACTION OF THE DCUN1 DOMAIN WITH CUL1; CUL2; CUL3; CUL4A; CUL4B; CUL5; UBE2F AND UBE2M</scope>
    <scope>FUNCTION</scope>
</reference>
<sequence length="304" mass="34291">MGQCVTKCKNPSSTLGSKNGDREPSNKSHSRRGAGHREEQVPPCGKPGGDILVNGTKKAEAATEACQLPTSSGDAGRESKSNAEESSLQRLEELFRRYKDEREDAILEEGMERFCNDLCVDPTEFRVLLLAWKFQAATMCKFTRKEFFDGCKAISADSIDGICARFPSLLTEAKQEDKFKDLYRFTFQFGLDSEEGQRSLHREIAIALWKLVFTQNNPPVLDQWLNFLTENPSGIKGISRDTWNMFLNFTQVIGPDLSNYSEDEAWPSLFDTFVEWEMERRKREGEGRGALSSGPEGLCPEEQT</sequence>
<accession>Q8IWE4</accession>
<accession>B3KVY4</accession>
<evidence type="ECO:0000255" key="1"/>
<evidence type="ECO:0000255" key="2">
    <source>
        <dbReference type="PROSITE-ProRule" id="PRU00574"/>
    </source>
</evidence>
<evidence type="ECO:0000256" key="3">
    <source>
        <dbReference type="SAM" id="MobiDB-lite"/>
    </source>
</evidence>
<evidence type="ECO:0000269" key="4">
    <source>
    </source>
</evidence>
<evidence type="ECO:0000269" key="5">
    <source>
    </source>
</evidence>
<evidence type="ECO:0000269" key="6">
    <source>
    </source>
</evidence>
<evidence type="ECO:0000269" key="7">
    <source>
    </source>
</evidence>
<evidence type="ECO:0000269" key="8">
    <source>
    </source>
</evidence>
<evidence type="ECO:0000269" key="9">
    <source>
    </source>
</evidence>
<evidence type="ECO:0000303" key="10">
    <source>
    </source>
</evidence>
<evidence type="ECO:0000303" key="11">
    <source>
    </source>
</evidence>
<evidence type="ECO:0000312" key="12">
    <source>
        <dbReference type="HGNC" id="HGNC:28734"/>
    </source>
</evidence>
<evidence type="ECO:0007829" key="13">
    <source>
        <dbReference type="PDB" id="4GBA"/>
    </source>
</evidence>
<protein>
    <recommendedName>
        <fullName>DCN1-like protein 3</fullName>
        <shortName evidence="10">DCNL3</shortName>
    </recommendedName>
    <alternativeName>
        <fullName>DCUN1 domain-containing protein 3</fullName>
    </alternativeName>
    <alternativeName>
        <fullName>Defective in cullin neddylation protein 1-like protein 3</fullName>
    </alternativeName>
    <alternativeName>
        <fullName evidence="11">Squamous cell carcinoma-related oncogene 3</fullName>
    </alternativeName>
</protein>
<feature type="initiator methionine" description="Removed" evidence="1">
    <location>
        <position position="1"/>
    </location>
</feature>
<feature type="chain" id="PRO_0000320048" description="DCN1-like protein 3">
    <location>
        <begin position="2"/>
        <end position="304"/>
    </location>
</feature>
<feature type="domain" description="DCUN1" evidence="2">
    <location>
        <begin position="86"/>
        <end position="278"/>
    </location>
</feature>
<feature type="region of interest" description="Disordered" evidence="3">
    <location>
        <begin position="1"/>
        <end position="86"/>
    </location>
</feature>
<feature type="region of interest" description="Disordered" evidence="3">
    <location>
        <begin position="284"/>
        <end position="304"/>
    </location>
</feature>
<feature type="lipid moiety-binding region" description="N-myristoyl glycine" evidence="1 5">
    <location>
        <position position="2"/>
    </location>
</feature>
<feature type="sequence variant" id="VAR_072689" description="In a cancer; uncertain significance." evidence="7">
    <original>G</original>
    <variation>S</variation>
    <location>
        <position position="2"/>
    </location>
</feature>
<feature type="sequence variant" id="VAR_072690" description="In a cancer; uncertain significance." evidence="7">
    <original>S</original>
    <variation>F</variation>
    <location>
        <position position="239"/>
    </location>
</feature>
<feature type="mutagenesis site" description="No effect on CAND1-, CUL1-, CUL3- and RBX1-binding." evidence="7">
    <location>
        <begin position="1"/>
        <end position="26"/>
    </location>
</feature>
<feature type="mutagenesis site" description="No effect on CAND1-, CUL1-, CUL3- and RBX1-binding. Loss of localization at the cell membrane. Loss of function of inhibition of DCUN1D1-mediated CUL1 neddylation. Loss of myristoylation. Loss of myristoylation; when associated with A-4. Loss of myristoylation; when associated with A-8. Loss of palmitoylation. Affects cell membrane localization, and localizes throughout the cytoplasm. Does not relocalizes CUL3 to the cell membrane." evidence="5 7">
    <original>G</original>
    <variation>A</variation>
    <location>
        <position position="2"/>
    </location>
</feature>
<feature type="mutagenesis site" description="Does not affect myristoylation; when associated with A-8. Loss of myristoylation; when associated with A-2. Loss of palmitoylation; when associated with A-8. Reduces cell membrane localization." evidence="5">
    <original>C</original>
    <variation>A</variation>
    <location>
        <position position="4"/>
    </location>
</feature>
<feature type="mutagenesis site" description="Does not affect myristoylation; when associated with A-4. Loss of myristoylation; when associated with A-2. Loss of palmitoylation; when associated with A-4. Reduces cell membrane localization." evidence="5">
    <original>C</original>
    <variation>A</variation>
    <location>
        <position position="8"/>
    </location>
</feature>
<feature type="mutagenesis site" description="Loss of interaction with CUL1, CUL2, CUL3, CULA4, CULA5, CAND1 and RBX1; when associated with R-265 and A-271. Does not affect both nucleus and cytoplasm localization; when associated with R-265 and A-271. Loss of interaction with CUL3; when associated with R-265 and A-271." evidence="5 8">
    <original>D</original>
    <variation>A</variation>
    <location>
        <position position="241"/>
    </location>
</feature>
<feature type="mutagenesis site" description="Loss of CAND1-, CUL1-, CUL3- and RBX1-binding. Loss of function of inhibition of DCUN1D1-mediated CUL1 neddylation, but no effect on localization at the cell membrane; when associated with R-265 and N-271." evidence="7">
    <original>D</original>
    <variation>N</variation>
    <location>
        <position position="241"/>
    </location>
</feature>
<feature type="mutagenesis site" description="Loss of CAND1-, CUL1-, CUL3- and RBX1-binding. Loss of function of inhibition of DCUN1D1-mediated CUL1 neddylation, but no effect on localization at the cell membrane; when associated with N-241 and N-271. Loss of interaction with CUL1, CUL2, CUL3, CULA4, CULA5, CAND1 and RBX1; when associated with A-241 and A-271. Does not affect both nucleus and cytoplasm localization; when associated with A-241 and A-271. Loss of interaction with CUL3; when associated with A-241 and A-271." evidence="5 7 8">
    <original>A</original>
    <variation>R</variation>
    <location>
        <position position="265"/>
    </location>
</feature>
<feature type="mutagenesis site" description="Loss of interaction with CUL1, CUL2, CUL3, CULA4, CULA5 CALD1 and RBX1; when associated with A-241 and R-265. Does not affect both nucleus and cytoplasm localization; when associated with A-241 and R-265. Loss of interaction with CUL3; when associated with A-241 and A-271." evidence="5 8">
    <original>D</original>
    <variation>A</variation>
    <location>
        <position position="271"/>
    </location>
</feature>
<feature type="mutagenesis site" description="Loss of CAND1-, CUL1-, CUL3- and RBX1-binding. Loss of function of inhibition of DCUN1D1-mediated CUL1 neddylation, but no effect on localization at the cell membrane; when associated with N-241 and R-265." evidence="7">
    <original>D</original>
    <variation>N</variation>
    <location>
        <position position="271"/>
    </location>
</feature>
<feature type="helix" evidence="13">
    <location>
        <begin position="90"/>
        <end position="96"/>
    </location>
</feature>
<feature type="strand" evidence="13">
    <location>
        <begin position="101"/>
        <end position="106"/>
    </location>
</feature>
<feature type="helix" evidence="13">
    <location>
        <begin position="108"/>
        <end position="117"/>
    </location>
</feature>
<feature type="helix" evidence="13">
    <location>
        <begin position="125"/>
        <end position="133"/>
    </location>
</feature>
<feature type="helix" evidence="13">
    <location>
        <begin position="144"/>
        <end position="153"/>
    </location>
</feature>
<feature type="helix" evidence="13">
    <location>
        <begin position="159"/>
        <end position="172"/>
    </location>
</feature>
<feature type="helix" evidence="13">
    <location>
        <begin position="176"/>
        <end position="190"/>
    </location>
</feature>
<feature type="turn" evidence="13">
    <location>
        <begin position="193"/>
        <end position="196"/>
    </location>
</feature>
<feature type="strand" evidence="13">
    <location>
        <begin position="198"/>
        <end position="201"/>
    </location>
</feature>
<feature type="helix" evidence="13">
    <location>
        <begin position="202"/>
        <end position="212"/>
    </location>
</feature>
<feature type="turn" evidence="13">
    <location>
        <begin position="213"/>
        <end position="215"/>
    </location>
</feature>
<feature type="helix" evidence="13">
    <location>
        <begin position="221"/>
        <end position="230"/>
    </location>
</feature>
<feature type="helix" evidence="13">
    <location>
        <begin position="240"/>
        <end position="252"/>
    </location>
</feature>
<feature type="helix" evidence="13">
    <location>
        <begin position="268"/>
        <end position="282"/>
    </location>
</feature>
<organism>
    <name type="scientific">Homo sapiens</name>
    <name type="common">Human</name>
    <dbReference type="NCBI Taxonomy" id="9606"/>
    <lineage>
        <taxon>Eukaryota</taxon>
        <taxon>Metazoa</taxon>
        <taxon>Chordata</taxon>
        <taxon>Craniata</taxon>
        <taxon>Vertebrata</taxon>
        <taxon>Euteleostomi</taxon>
        <taxon>Mammalia</taxon>
        <taxon>Eutheria</taxon>
        <taxon>Euarchontoglires</taxon>
        <taxon>Primates</taxon>
        <taxon>Haplorrhini</taxon>
        <taxon>Catarrhini</taxon>
        <taxon>Hominidae</taxon>
        <taxon>Homo</taxon>
    </lineage>
</organism>